<accession>B3P6T8</accession>
<evidence type="ECO:0000250" key="1"/>
<evidence type="ECO:0000250" key="2">
    <source>
        <dbReference type="UniProtKB" id="Q8SXY6"/>
    </source>
</evidence>
<evidence type="ECO:0000255" key="3"/>
<evidence type="ECO:0000255" key="4">
    <source>
        <dbReference type="PROSITE-ProRule" id="PRU00096"/>
    </source>
</evidence>
<evidence type="ECO:0000312" key="5">
    <source>
        <dbReference type="EMBL" id="EDV53758.1"/>
    </source>
</evidence>
<sequence>MARAALIVCLLMACAWSSHAVMFKLSPNTQKCLKEDIQANQLVMGEYEVSDVPGQIIDYIARDTKGHILSQKEHITKGKFSFMSEVYDAYEICFISKVPAHQRGIVQEVSLLTKKGVETKSYEGIGEASKLKPLEVDLKRLEDLSDSIVRDFVLMRKREEEMRDTNEKTNSRVLFFSIFSMCCLLGLATWQVLYLRRYFKAKKLIE</sequence>
<feature type="signal peptide" evidence="3">
    <location>
        <begin position="1"/>
        <end position="20"/>
    </location>
</feature>
<feature type="chain" id="PRO_0000393915" description="Transmembrane emp24 domain-containing protein bai" evidence="3">
    <location>
        <begin position="21"/>
        <end position="206"/>
    </location>
</feature>
<feature type="topological domain" description="Lumenal" evidence="3">
    <location>
        <begin position="21"/>
        <end position="172"/>
    </location>
</feature>
<feature type="transmembrane region" description="Helical" evidence="3">
    <location>
        <begin position="173"/>
        <end position="193"/>
    </location>
</feature>
<feature type="topological domain" description="Cytoplasmic" evidence="3">
    <location>
        <begin position="194"/>
        <end position="206"/>
    </location>
</feature>
<feature type="domain" description="GOLD" evidence="4">
    <location>
        <begin position="30"/>
        <end position="140"/>
    </location>
</feature>
<gene>
    <name evidence="2" type="primary">bai</name>
    <name type="ORF">GG11349</name>
</gene>
<protein>
    <recommendedName>
        <fullName evidence="2">Transmembrane emp24 domain-containing protein bai</fullName>
    </recommendedName>
</protein>
<dbReference type="EMBL" id="CH954182">
    <property type="protein sequence ID" value="EDV53758.1"/>
    <property type="molecule type" value="Genomic_DNA"/>
</dbReference>
<dbReference type="SMR" id="B3P6T8"/>
<dbReference type="EnsemblMetazoa" id="FBtr0131403">
    <property type="protein sequence ID" value="FBpp0129895"/>
    <property type="gene ID" value="FBgn0103649"/>
</dbReference>
<dbReference type="EnsemblMetazoa" id="XM_001981852.3">
    <property type="protein sequence ID" value="XP_001981888.1"/>
    <property type="gene ID" value="LOC6555444"/>
</dbReference>
<dbReference type="GeneID" id="6555444"/>
<dbReference type="KEGG" id="der:6555444"/>
<dbReference type="CTD" id="42996"/>
<dbReference type="eggNOG" id="KOG1691">
    <property type="taxonomic scope" value="Eukaryota"/>
</dbReference>
<dbReference type="HOGENOM" id="CLU_066963_3_1_1"/>
<dbReference type="OMA" id="DVFEACF"/>
<dbReference type="OrthoDB" id="759142at2759"/>
<dbReference type="PhylomeDB" id="B3P6T8"/>
<dbReference type="ChiTaRS" id="bai">
    <property type="organism name" value="fly"/>
</dbReference>
<dbReference type="Proteomes" id="UP000008711">
    <property type="component" value="Unassembled WGS sequence"/>
</dbReference>
<dbReference type="GO" id="GO:0005737">
    <property type="term" value="C:cytoplasm"/>
    <property type="evidence" value="ECO:0007669"/>
    <property type="project" value="GOC"/>
</dbReference>
<dbReference type="GO" id="GO:0016020">
    <property type="term" value="C:membrane"/>
    <property type="evidence" value="ECO:0007669"/>
    <property type="project" value="UniProtKB-SubCell"/>
</dbReference>
<dbReference type="GO" id="GO:0038024">
    <property type="term" value="F:cargo receptor activity"/>
    <property type="evidence" value="ECO:0007669"/>
    <property type="project" value="EnsemblMetazoa"/>
</dbReference>
<dbReference type="GO" id="GO:0009953">
    <property type="term" value="P:dorsal/ventral pattern formation"/>
    <property type="evidence" value="ECO:0000250"/>
    <property type="project" value="UniProtKB"/>
</dbReference>
<dbReference type="GO" id="GO:0006888">
    <property type="term" value="P:endoplasmic reticulum to Golgi vesicle-mediated transport"/>
    <property type="evidence" value="ECO:0007669"/>
    <property type="project" value="EnsemblMetazoa"/>
</dbReference>
<dbReference type="InterPro" id="IPR015720">
    <property type="entry name" value="Emp24-like"/>
</dbReference>
<dbReference type="InterPro" id="IPR009038">
    <property type="entry name" value="GOLD_dom"/>
</dbReference>
<dbReference type="PANTHER" id="PTHR22811">
    <property type="entry name" value="TRANSMEMBRANE EMP24 DOMAIN-CONTAINING PROTEIN"/>
    <property type="match status" value="1"/>
</dbReference>
<dbReference type="Pfam" id="PF01105">
    <property type="entry name" value="EMP24_GP25L"/>
    <property type="match status" value="1"/>
</dbReference>
<dbReference type="SMART" id="SM01190">
    <property type="entry name" value="EMP24_GP25L"/>
    <property type="match status" value="1"/>
</dbReference>
<dbReference type="PROSITE" id="PS50866">
    <property type="entry name" value="GOLD"/>
    <property type="match status" value="1"/>
</dbReference>
<comment type="function">
    <text evidence="1">Eca and bai are essential, though not redundant, for dorsoventral patterning of the embryo. Specifically required during early embryogenesis for the activity of maternal tkv, while the zygotic tkv is not affected (By similarity).</text>
</comment>
<comment type="subcellular location">
    <subcellularLocation>
        <location evidence="1">Membrane</location>
        <topology evidence="3">Single-pass type I membrane protein</topology>
    </subcellularLocation>
</comment>
<comment type="similarity">
    <text evidence="3">Belongs to the EMP24/GP25L family.</text>
</comment>
<keyword id="KW-0217">Developmental protein</keyword>
<keyword id="KW-0472">Membrane</keyword>
<keyword id="KW-0732">Signal</keyword>
<keyword id="KW-0812">Transmembrane</keyword>
<keyword id="KW-1133">Transmembrane helix</keyword>
<proteinExistence type="inferred from homology"/>
<name>TMEDA_DROER</name>
<organism>
    <name type="scientific">Drosophila erecta</name>
    <name type="common">Fruit fly</name>
    <dbReference type="NCBI Taxonomy" id="7220"/>
    <lineage>
        <taxon>Eukaryota</taxon>
        <taxon>Metazoa</taxon>
        <taxon>Ecdysozoa</taxon>
        <taxon>Arthropoda</taxon>
        <taxon>Hexapoda</taxon>
        <taxon>Insecta</taxon>
        <taxon>Pterygota</taxon>
        <taxon>Neoptera</taxon>
        <taxon>Endopterygota</taxon>
        <taxon>Diptera</taxon>
        <taxon>Brachycera</taxon>
        <taxon>Muscomorpha</taxon>
        <taxon>Ephydroidea</taxon>
        <taxon>Drosophilidae</taxon>
        <taxon>Drosophila</taxon>
        <taxon>Sophophora</taxon>
    </lineage>
</organism>
<reference evidence="5" key="1">
    <citation type="journal article" date="2007" name="Nature">
        <title>Evolution of genes and genomes on the Drosophila phylogeny.</title>
        <authorList>
            <consortium name="Drosophila 12 genomes consortium"/>
        </authorList>
    </citation>
    <scope>NUCLEOTIDE SEQUENCE [LARGE SCALE GENOMIC DNA]</scope>
    <source>
        <strain evidence="5">Tucson 14021-0224.01</strain>
    </source>
</reference>